<proteinExistence type="evidence at protein level"/>
<evidence type="ECO:0000255" key="1"/>
<evidence type="ECO:0000255" key="2">
    <source>
        <dbReference type="PROSITE-ProRule" id="PRU00283"/>
    </source>
</evidence>
<evidence type="ECO:0000269" key="3">
    <source>
    </source>
</evidence>
<evidence type="ECO:0000269" key="4">
    <source>
    </source>
</evidence>
<evidence type="ECO:0000269" key="5">
    <source>
    </source>
</evidence>
<evidence type="ECO:0000303" key="6">
    <source>
    </source>
</evidence>
<evidence type="ECO:0000303" key="7">
    <source>
    </source>
</evidence>
<evidence type="ECO:0000303" key="8">
    <source>
    </source>
</evidence>
<evidence type="ECO:0000305" key="9"/>
<evidence type="ECO:0000305" key="10">
    <source>
    </source>
</evidence>
<evidence type="ECO:0000312" key="11">
    <source>
        <dbReference type="EMBL" id="EDO78830.1"/>
    </source>
</evidence>
<evidence type="ECO:0000312" key="12">
    <source>
        <dbReference type="EMBL" id="KAE8301505.1"/>
    </source>
</evidence>
<evidence type="ECO:0000312" key="13">
    <source>
        <dbReference type="Proteomes" id="UP000001548"/>
    </source>
</evidence>
<evidence type="ECO:0007744" key="14">
    <source>
        <dbReference type="PDB" id="2VVG"/>
    </source>
</evidence>
<evidence type="ECO:0007829" key="15">
    <source>
        <dbReference type="PDB" id="2VVG"/>
    </source>
</evidence>
<protein>
    <recommendedName>
        <fullName evidence="7 8">Kinesin-2a</fullName>
        <shortName evidence="9">KIN2a</shortName>
    </recommendedName>
    <alternativeName>
        <fullName evidence="8">Anterograde kinesin-2a motor</fullName>
    </alternativeName>
    <alternativeName>
        <fullName evidence="6">GiKIN2a</fullName>
    </alternativeName>
    <alternativeName>
        <fullName evidence="6">Kinesin 2a homolog</fullName>
    </alternativeName>
    <alternativeName>
        <fullName evidence="6">Plus end-directed intraflagellar transport kinesin-2a motor</fullName>
        <shortName evidence="6">Plus-end directed IFT kinesin-2a motor</shortName>
    </alternativeName>
</protein>
<accession>A8BKD1</accession>
<gene>
    <name evidence="6" type="primary">kin-2a</name>
    <name evidence="12" type="ORF">GL50803_0017333</name>
    <name evidence="11" type="ORF">GL50803_17333</name>
</gene>
<dbReference type="EMBL" id="AACB02000022">
    <property type="protein sequence ID" value="EDO78830.1"/>
    <property type="molecule type" value="Genomic_DNA"/>
</dbReference>
<dbReference type="EMBL" id="AACB03000005">
    <property type="protein sequence ID" value="KAE8301505.1"/>
    <property type="molecule type" value="Genomic_DNA"/>
</dbReference>
<dbReference type="RefSeq" id="XP_001706504.1">
    <property type="nucleotide sequence ID" value="XM_001706452.1"/>
</dbReference>
<dbReference type="PDB" id="2VVG">
    <property type="method" value="X-ray"/>
    <property type="resolution" value="1.60 A"/>
    <property type="chains" value="A/B=1-350"/>
</dbReference>
<dbReference type="PDBsum" id="2VVG"/>
<dbReference type="SMR" id="A8BKD1"/>
<dbReference type="FunCoup" id="A8BKD1">
    <property type="interactions" value="83"/>
</dbReference>
<dbReference type="STRING" id="184922.A8BKD1"/>
<dbReference type="EnsemblProtists" id="EDO78830">
    <property type="protein sequence ID" value="EDO78830"/>
    <property type="gene ID" value="GL50803_17333"/>
</dbReference>
<dbReference type="GeneID" id="5699393"/>
<dbReference type="KEGG" id="gla:GL50803_0017333"/>
<dbReference type="VEuPathDB" id="GiardiaDB:GL50803_17333"/>
<dbReference type="HOGENOM" id="CLU_001485_22_4_1"/>
<dbReference type="InParanoid" id="A8BKD1"/>
<dbReference type="OMA" id="GKYRYSN"/>
<dbReference type="EvolutionaryTrace" id="A8BKD1"/>
<dbReference type="Proteomes" id="UP000001548">
    <property type="component" value="Chromosome 1"/>
</dbReference>
<dbReference type="GO" id="GO:0097729">
    <property type="term" value="C:9+2 motile cilium"/>
    <property type="evidence" value="ECO:0000314"/>
    <property type="project" value="UniProtKB"/>
</dbReference>
<dbReference type="GO" id="GO:0005930">
    <property type="term" value="C:axoneme"/>
    <property type="evidence" value="ECO:0000314"/>
    <property type="project" value="UniProtKB"/>
</dbReference>
<dbReference type="GO" id="GO:0036064">
    <property type="term" value="C:ciliary basal body"/>
    <property type="evidence" value="ECO:0000314"/>
    <property type="project" value="UniProtKB"/>
</dbReference>
<dbReference type="GO" id="GO:1990900">
    <property type="term" value="C:ciliary pocket collar"/>
    <property type="evidence" value="ECO:0000314"/>
    <property type="project" value="UniProtKB"/>
</dbReference>
<dbReference type="GO" id="GO:0097542">
    <property type="term" value="C:ciliary tip"/>
    <property type="evidence" value="ECO:0000314"/>
    <property type="project" value="UniProtKB"/>
</dbReference>
<dbReference type="GO" id="GO:0005737">
    <property type="term" value="C:cytoplasm"/>
    <property type="evidence" value="ECO:0000318"/>
    <property type="project" value="GO_Central"/>
</dbReference>
<dbReference type="GO" id="GO:0005871">
    <property type="term" value="C:kinesin complex"/>
    <property type="evidence" value="ECO:0000318"/>
    <property type="project" value="GO_Central"/>
</dbReference>
<dbReference type="GO" id="GO:0005874">
    <property type="term" value="C:microtubule"/>
    <property type="evidence" value="ECO:0000318"/>
    <property type="project" value="GO_Central"/>
</dbReference>
<dbReference type="GO" id="GO:0043531">
    <property type="term" value="F:ADP binding"/>
    <property type="evidence" value="ECO:0000314"/>
    <property type="project" value="UniProtKB"/>
</dbReference>
<dbReference type="GO" id="GO:0005524">
    <property type="term" value="F:ATP binding"/>
    <property type="evidence" value="ECO:0000305"/>
    <property type="project" value="UniProtKB"/>
</dbReference>
<dbReference type="GO" id="GO:0016887">
    <property type="term" value="F:ATP hydrolysis activity"/>
    <property type="evidence" value="ECO:0000318"/>
    <property type="project" value="GO_Central"/>
</dbReference>
<dbReference type="GO" id="GO:0000287">
    <property type="term" value="F:magnesium ion binding"/>
    <property type="evidence" value="ECO:0000314"/>
    <property type="project" value="UniProtKB"/>
</dbReference>
<dbReference type="GO" id="GO:0008017">
    <property type="term" value="F:microtubule binding"/>
    <property type="evidence" value="ECO:0000318"/>
    <property type="project" value="GO_Central"/>
</dbReference>
<dbReference type="GO" id="GO:0003777">
    <property type="term" value="F:microtubule motor activity"/>
    <property type="evidence" value="ECO:0000318"/>
    <property type="project" value="GO_Central"/>
</dbReference>
<dbReference type="GO" id="GO:0008574">
    <property type="term" value="F:plus-end-directed microtubule motor activity"/>
    <property type="evidence" value="ECO:0000305"/>
    <property type="project" value="UniProtKB"/>
</dbReference>
<dbReference type="GO" id="GO:0060271">
    <property type="term" value="P:cilium assembly"/>
    <property type="evidence" value="ECO:0000314"/>
    <property type="project" value="UniProtKB"/>
</dbReference>
<dbReference type="GO" id="GO:0035720">
    <property type="term" value="P:intraciliary anterograde transport"/>
    <property type="evidence" value="ECO:0000303"/>
    <property type="project" value="UniProtKB"/>
</dbReference>
<dbReference type="GO" id="GO:0042073">
    <property type="term" value="P:intraciliary transport"/>
    <property type="evidence" value="ECO:0000305"/>
    <property type="project" value="UniProtKB"/>
</dbReference>
<dbReference type="GO" id="GO:0035735">
    <property type="term" value="P:intraciliary transport involved in cilium assembly"/>
    <property type="evidence" value="ECO:0000305"/>
    <property type="project" value="UniProtKB"/>
</dbReference>
<dbReference type="GO" id="GO:0007018">
    <property type="term" value="P:microtubule-based movement"/>
    <property type="evidence" value="ECO:0000318"/>
    <property type="project" value="GO_Central"/>
</dbReference>
<dbReference type="FunFam" id="3.40.850.10:FF:000235">
    <property type="entry name" value="Kinesin-like protein"/>
    <property type="match status" value="1"/>
</dbReference>
<dbReference type="Gene3D" id="3.40.850.10">
    <property type="entry name" value="Kinesin motor domain"/>
    <property type="match status" value="1"/>
</dbReference>
<dbReference type="InterPro" id="IPR027640">
    <property type="entry name" value="Kinesin-like_fam"/>
</dbReference>
<dbReference type="InterPro" id="IPR019821">
    <property type="entry name" value="Kinesin_motor_CS"/>
</dbReference>
<dbReference type="InterPro" id="IPR001752">
    <property type="entry name" value="Kinesin_motor_dom"/>
</dbReference>
<dbReference type="InterPro" id="IPR036961">
    <property type="entry name" value="Kinesin_motor_dom_sf"/>
</dbReference>
<dbReference type="InterPro" id="IPR027417">
    <property type="entry name" value="P-loop_NTPase"/>
</dbReference>
<dbReference type="PANTHER" id="PTHR47968">
    <property type="entry name" value="CENTROMERE PROTEIN E"/>
    <property type="match status" value="1"/>
</dbReference>
<dbReference type="PANTHER" id="PTHR47968:SF76">
    <property type="entry name" value="KINESIN-LIKE PROTEIN"/>
    <property type="match status" value="1"/>
</dbReference>
<dbReference type="Pfam" id="PF00225">
    <property type="entry name" value="Kinesin"/>
    <property type="match status" value="1"/>
</dbReference>
<dbReference type="PRINTS" id="PR00380">
    <property type="entry name" value="KINESINHEAVY"/>
</dbReference>
<dbReference type="SMART" id="SM00129">
    <property type="entry name" value="KISc"/>
    <property type="match status" value="1"/>
</dbReference>
<dbReference type="SUPFAM" id="SSF52540">
    <property type="entry name" value="P-loop containing nucleoside triphosphate hydrolases"/>
    <property type="match status" value="1"/>
</dbReference>
<dbReference type="PROSITE" id="PS00411">
    <property type="entry name" value="KINESIN_MOTOR_1"/>
    <property type="match status" value="1"/>
</dbReference>
<dbReference type="PROSITE" id="PS50067">
    <property type="entry name" value="KINESIN_MOTOR_2"/>
    <property type="match status" value="1"/>
</dbReference>
<reference evidence="11 13" key="1">
    <citation type="journal article" date="2007" name="Science">
        <title>Genomic minimalism in the early diverging intestinal parasite Giardia lamblia.</title>
        <authorList>
            <person name="Morrison H.G."/>
            <person name="McArthur A.G."/>
            <person name="Gillin F.D."/>
            <person name="Aley S.B."/>
            <person name="Adam R.D."/>
            <person name="Olsen G.J."/>
            <person name="Best A.A."/>
            <person name="Cande W.Z."/>
            <person name="Chen F."/>
            <person name="Cipriano M.J."/>
            <person name="Davids B.J."/>
            <person name="Dawson S.C."/>
            <person name="Elmendorf H.G."/>
            <person name="Hehl A.B."/>
            <person name="Holder M.E."/>
            <person name="Huse S.M."/>
            <person name="Kim U.U."/>
            <person name="Lasek-Nesselquist E."/>
            <person name="Manning G."/>
            <person name="Nigam A."/>
            <person name="Nixon J.E.J."/>
            <person name="Palm D."/>
            <person name="Passamaneck N.E."/>
            <person name="Prabhu A."/>
            <person name="Reich C.I."/>
            <person name="Reiner D.S."/>
            <person name="Samuelson J."/>
            <person name="Svard S.G."/>
            <person name="Sogin M.L."/>
        </authorList>
    </citation>
    <scope>NUCLEOTIDE SEQUENCE [LARGE SCALE GENOMIC DNA]</scope>
    <source>
        <strain evidence="13">ATCC 50803 / WB clone C6</strain>
    </source>
</reference>
<reference evidence="12" key="2">
    <citation type="submission" date="2019-07" db="EMBL/GenBank/DDBJ databases">
        <title>New Giardia intestinalis WB genome in near-complete chromosomes.</title>
        <authorList>
            <person name="Xu F."/>
            <person name="Jex A."/>
            <person name="Svard S.G."/>
        </authorList>
    </citation>
    <scope>NUCLEOTIDE SEQUENCE [LARGE SCALE GENOMIC DNA]</scope>
    <source>
        <strain evidence="12">ATCC 50803 / WB clone C6</strain>
    </source>
</reference>
<reference key="3">
    <citation type="journal article" date="2019" name="Elife">
        <title>Length-dependent disassembly maintains four different flagellar lengths in Giardia.</title>
        <authorList>
            <person name="McInally S.G."/>
            <person name="Kondev J."/>
            <person name="Dawson S.C."/>
        </authorList>
    </citation>
    <scope>FUNCTION</scope>
    <scope>SUBCELLULAR LOCATION</scope>
    <source>
        <strain evidence="8">ATCC 50803 / WB clone C6</strain>
    </source>
</reference>
<reference key="4">
    <citation type="journal article" date="2019" name="Mol. Biol. Cell">
        <title>Robust and stable transcriptional repression in Giardia using CRISPRi.</title>
        <authorList>
            <person name="McInally S.G."/>
            <person name="Hagen K.D."/>
            <person name="Nosala C."/>
            <person name="Williams J."/>
            <person name="Nguyen K."/>
            <person name="Booker J."/>
            <person name="Jones K."/>
            <person name="Dawson S.C."/>
        </authorList>
    </citation>
    <scope>DISRUPTION PHENOTYPE</scope>
    <source>
        <strain evidence="7">ATCC 50803 / WB clone C6</strain>
    </source>
</reference>
<reference evidence="14" key="5">
    <citation type="journal article" date="2008" name="Mol. Biol. Cell">
        <title>High-resolution crystal structure and in vivo function of a kinesin-2 homologue in Giardia intestinalis.</title>
        <authorList>
            <person name="Hoeng J.C."/>
            <person name="Dawson S.C."/>
            <person name="House S.A."/>
            <person name="Sagolla M.S."/>
            <person name="Pham J.K."/>
            <person name="Mancuso J.J."/>
            <person name="Lowe J."/>
            <person name="Cande W.Z."/>
        </authorList>
    </citation>
    <scope>X-RAY CRYSTALLOGRAPHY (1.60 ANGSTROMS) OF 1-350 IN COMPLEX WITH ADP AND MAGNESIUM</scope>
    <scope>FUNCTION</scope>
    <scope>SUBUNIT</scope>
    <scope>SUBCELLULAR LOCATION</scope>
    <scope>MUTAGENESIS OF THR-104 AND 351-ARG--GLU-718</scope>
    <source>
        <strain evidence="6">ATCC 50803 / WB clone C6</strain>
    </source>
</reference>
<organism evidence="11">
    <name type="scientific">Giardia intestinalis (strain ATCC 50803 / WB clone C6)</name>
    <name type="common">Giardia lamblia</name>
    <dbReference type="NCBI Taxonomy" id="184922"/>
    <lineage>
        <taxon>Eukaryota</taxon>
        <taxon>Metamonada</taxon>
        <taxon>Diplomonadida</taxon>
        <taxon>Hexamitidae</taxon>
        <taxon>Giardiinae</taxon>
        <taxon>Giardia</taxon>
    </lineage>
</organism>
<keyword id="KW-0002">3D-structure</keyword>
<keyword id="KW-0067">ATP-binding</keyword>
<keyword id="KW-0966">Cell projection</keyword>
<keyword id="KW-0969">Cilium</keyword>
<keyword id="KW-0970">Cilium biogenesis/degradation</keyword>
<keyword id="KW-0175">Coiled coil</keyword>
<keyword id="KW-0963">Cytoplasm</keyword>
<keyword id="KW-0206">Cytoskeleton</keyword>
<keyword id="KW-0282">Flagellum</keyword>
<keyword id="KW-0460">Magnesium</keyword>
<keyword id="KW-0479">Metal-binding</keyword>
<keyword id="KW-0493">Microtubule</keyword>
<keyword id="KW-0505">Motor protein</keyword>
<keyword id="KW-0547">Nucleotide-binding</keyword>
<keyword id="KW-1185">Reference proteome</keyword>
<keyword id="KW-0813">Transport</keyword>
<comment type="function">
    <text evidence="3 10">Involved in anterograde intraflagellar transport (IFT) (Probable). Involved in flagellar assembly (PubMed:18463165).</text>
</comment>
<comment type="subunit">
    <text evidence="3">Monomer.</text>
</comment>
<comment type="subcellular location">
    <subcellularLocation>
        <location evidence="3 5">Cell projection</location>
        <location evidence="3 5">Cilium</location>
        <location evidence="3 5">Flagellum</location>
    </subcellularLocation>
    <subcellularLocation>
        <location evidence="3 5">Cytoplasm</location>
        <location evidence="3 5">Cytoskeleton</location>
        <location evidence="3 5">Flagellum axoneme</location>
    </subcellularLocation>
    <subcellularLocation>
        <location evidence="5">Cytoplasm</location>
        <location evidence="5">Cytoskeleton</location>
        <location evidence="5">Flagellum basal body</location>
    </subcellularLocation>
    <text evidence="3 5">Localizes to the cytoplasmic and membrane-bound portions of each of the eight axonemes, localizing particularly at the flagellar pores and at the distal flagellar tips (PubMed:18463165, PubMed:31855176). Localizes at a lower level to the cytoplasmic axonemes and to the basal bodies (PubMed:31855176).</text>
</comment>
<comment type="disruption phenotype">
    <text evidence="4">Knockdown of expression by CRISPR interference (CRISPRi) system results in significantly shorter membrane-bound portions of the caudal flagella.</text>
</comment>
<comment type="similarity">
    <text evidence="9">Belongs to the TRAFAC class myosin-kinesin ATPase superfamily. Kinesin family. Kinesin II subfamily.</text>
</comment>
<sequence>MSSDNIKVIVRCRPLNARETRENALNIIRMDEASAQVIVDPPEQEKSATQAKKVPRTFTFDAVYDQTSCNYGIFQASFKPLIDAVLEGFNSTIFAYGQTGAGKTWTMGGNKEEPGAIPNSFKHLFDAINSSSSNQNFLVIGSYLELYNEEIRDLIKNNTKLPLKEDKTRGIYVDGLSMHRVTTAAELSALMDKGFANRHVAATQMNDTSSRSHSIFMVRIECSEVIENKEVIRVGKLNLVDLAGSERQSKTGATGETLVEGAKINLSLSALGLVISKLVEGATHIPYRDSKLTRLLQDSLGGNSKTLMCANISPASTNYDETMSTLRYADRAKQIKNKPRINEDPKDAQIRQLRDHIARLEAQLAEAQANGAKPMDVLRIGKSLMKAINGDELNLDGTFQGTAGAKLSEARDGDSEGESTEEEIVFVEDEASRKAADELEAKRRALAEAKQKRESELEQKEALNKEAIVTLTDLKSQLSAIKNSVFVVKQLEIKDKVLGKAQQKLTTRQEKHNALQQALQNKQTEHQTKTAEILSAVEKLERLKADISKTEAEINEVNQEIDDITEQHALSIEEERRELKEVDKRSALLDAIIQTFIPQCEVAKAEALAEYDEETMKWAISPEKVDREHQMLLKRVRHMQILYPSGSTKPVFFGKGKDTRALVNFSQLSGNILELEPELPERMTVGEEMDGYQSYGMNEDEMHDTQLQMFYSQIDTYE</sequence>
<name>KIN2A_GIAIC</name>
<feature type="chain" id="PRO_0000459252" description="Kinesin-2a">
    <location>
        <begin position="1"/>
        <end position="718"/>
    </location>
</feature>
<feature type="domain" description="Kinesin motor" evidence="2">
    <location>
        <begin position="5"/>
        <end position="335"/>
    </location>
</feature>
<feature type="coiled-coil region" evidence="1">
    <location>
        <begin position="432"/>
        <end position="477"/>
    </location>
</feature>
<feature type="binding site" evidence="2">
    <location>
        <begin position="97"/>
        <end position="104"/>
    </location>
    <ligand>
        <name>ATP</name>
        <dbReference type="ChEBI" id="CHEBI:30616"/>
    </ligand>
</feature>
<feature type="binding site" evidence="3 14">
    <location>
        <position position="100"/>
    </location>
    <ligand>
        <name>ADP</name>
        <dbReference type="ChEBI" id="CHEBI:456216"/>
    </ligand>
</feature>
<feature type="binding site" evidence="3 14">
    <location>
        <position position="102"/>
    </location>
    <ligand>
        <name>ADP</name>
        <dbReference type="ChEBI" id="CHEBI:456216"/>
    </ligand>
</feature>
<feature type="binding site" evidence="3 14">
    <location>
        <position position="103"/>
    </location>
    <ligand>
        <name>ADP</name>
        <dbReference type="ChEBI" id="CHEBI:456216"/>
    </ligand>
</feature>
<feature type="binding site" evidence="3 14">
    <location>
        <position position="104"/>
    </location>
    <ligand>
        <name>ADP</name>
        <dbReference type="ChEBI" id="CHEBI:456216"/>
    </ligand>
</feature>
<feature type="binding site" evidence="3 14">
    <location>
        <position position="104"/>
    </location>
    <ligand>
        <name>Mg(2+)</name>
        <dbReference type="ChEBI" id="CHEBI:18420"/>
    </ligand>
</feature>
<feature type="binding site" evidence="3 14">
    <location>
        <position position="105"/>
    </location>
    <ligand>
        <name>ADP</name>
        <dbReference type="ChEBI" id="CHEBI:456216"/>
    </ligand>
</feature>
<feature type="mutagenesis site" description="Motor domain mutant, the overexpression of which leads to significantly shorter membrane-bound axonemes of the caudal, ventral and posteriolateral flagellar pairs, but has no effect in lengths of the cytoplasmic portions of the axonemes; when associated with 351-R--E-718 del." evidence="3">
    <original>T</original>
    <variation>N</variation>
    <location>
        <position position="104"/>
    </location>
</feature>
<feature type="mutagenesis site" description="Motor domain mutant, the overexpression of which leads to significantly shorter membrane-bound axonemes of the caudal, ventral and posteriolateral flagellar pairs, but has no effect in lengths of the cytoplasmic portions of the axonemes; when associated with N-104." evidence="3">
    <location>
        <begin position="351"/>
        <end position="718"/>
    </location>
</feature>
<feature type="strand" evidence="15">
    <location>
        <begin position="7"/>
        <end position="12"/>
    </location>
</feature>
<feature type="helix" evidence="15">
    <location>
        <begin position="17"/>
        <end position="21"/>
    </location>
</feature>
<feature type="strand" evidence="15">
    <location>
        <begin position="28"/>
        <end position="31"/>
    </location>
</feature>
<feature type="helix" evidence="15">
    <location>
        <begin position="32"/>
        <end position="34"/>
    </location>
</feature>
<feature type="strand" evidence="15">
    <location>
        <begin position="36"/>
        <end position="39"/>
    </location>
</feature>
<feature type="strand" evidence="15">
    <location>
        <begin position="56"/>
        <end position="59"/>
    </location>
</feature>
<feature type="strand" evidence="15">
    <location>
        <begin position="61"/>
        <end position="64"/>
    </location>
</feature>
<feature type="helix" evidence="15">
    <location>
        <begin position="70"/>
        <end position="76"/>
    </location>
</feature>
<feature type="helix" evidence="15">
    <location>
        <begin position="79"/>
        <end position="86"/>
    </location>
</feature>
<feature type="strand" evidence="15">
    <location>
        <begin position="91"/>
        <end position="96"/>
    </location>
</feature>
<feature type="helix" evidence="15">
    <location>
        <begin position="103"/>
        <end position="107"/>
    </location>
</feature>
<feature type="strand" evidence="15">
    <location>
        <begin position="111"/>
        <end position="114"/>
    </location>
</feature>
<feature type="helix" evidence="15">
    <location>
        <begin position="116"/>
        <end position="129"/>
    </location>
</feature>
<feature type="strand" evidence="15">
    <location>
        <begin position="135"/>
        <end position="147"/>
    </location>
</feature>
<feature type="strand" evidence="15">
    <location>
        <begin position="150"/>
        <end position="153"/>
    </location>
</feature>
<feature type="turn" evidence="15">
    <location>
        <begin position="154"/>
        <end position="157"/>
    </location>
</feature>
<feature type="strand" evidence="15">
    <location>
        <begin position="158"/>
        <end position="161"/>
    </location>
</feature>
<feature type="strand" evidence="15">
    <location>
        <begin position="163"/>
        <end position="166"/>
    </location>
</feature>
<feature type="turn" evidence="15">
    <location>
        <begin position="167"/>
        <end position="169"/>
    </location>
</feature>
<feature type="strand" evidence="15">
    <location>
        <begin position="170"/>
        <end position="173"/>
    </location>
</feature>
<feature type="strand" evidence="15">
    <location>
        <begin position="179"/>
        <end position="183"/>
    </location>
</feature>
<feature type="helix" evidence="15">
    <location>
        <begin position="184"/>
        <end position="197"/>
    </location>
</feature>
<feature type="strand" evidence="15">
    <location>
        <begin position="213"/>
        <end position="224"/>
    </location>
</feature>
<feature type="strand" evidence="15">
    <location>
        <begin position="231"/>
        <end position="241"/>
    </location>
</feature>
<feature type="helix" evidence="15">
    <location>
        <begin position="266"/>
        <end position="280"/>
    </location>
</feature>
<feature type="helix" evidence="15">
    <location>
        <begin position="287"/>
        <end position="289"/>
    </location>
</feature>
<feature type="helix" evidence="15">
    <location>
        <begin position="291"/>
        <end position="295"/>
    </location>
</feature>
<feature type="turn" evidence="15">
    <location>
        <begin position="296"/>
        <end position="301"/>
    </location>
</feature>
<feature type="strand" evidence="15">
    <location>
        <begin position="302"/>
        <end position="312"/>
    </location>
</feature>
<feature type="helix" evidence="15">
    <location>
        <begin position="316"/>
        <end position="318"/>
    </location>
</feature>
<feature type="helix" evidence="15">
    <location>
        <begin position="319"/>
        <end position="332"/>
    </location>
</feature>